<reference key="1">
    <citation type="journal article" date="2009" name="PLoS Genet.">
        <title>Organised genome dynamics in the Escherichia coli species results in highly diverse adaptive paths.</title>
        <authorList>
            <person name="Touchon M."/>
            <person name="Hoede C."/>
            <person name="Tenaillon O."/>
            <person name="Barbe V."/>
            <person name="Baeriswyl S."/>
            <person name="Bidet P."/>
            <person name="Bingen E."/>
            <person name="Bonacorsi S."/>
            <person name="Bouchier C."/>
            <person name="Bouvet O."/>
            <person name="Calteau A."/>
            <person name="Chiapello H."/>
            <person name="Clermont O."/>
            <person name="Cruveiller S."/>
            <person name="Danchin A."/>
            <person name="Diard M."/>
            <person name="Dossat C."/>
            <person name="Karoui M.E."/>
            <person name="Frapy E."/>
            <person name="Garry L."/>
            <person name="Ghigo J.M."/>
            <person name="Gilles A.M."/>
            <person name="Johnson J."/>
            <person name="Le Bouguenec C."/>
            <person name="Lescat M."/>
            <person name="Mangenot S."/>
            <person name="Martinez-Jehanne V."/>
            <person name="Matic I."/>
            <person name="Nassif X."/>
            <person name="Oztas S."/>
            <person name="Petit M.A."/>
            <person name="Pichon C."/>
            <person name="Rouy Z."/>
            <person name="Ruf C.S."/>
            <person name="Schneider D."/>
            <person name="Tourret J."/>
            <person name="Vacherie B."/>
            <person name="Vallenet D."/>
            <person name="Medigue C."/>
            <person name="Rocha E.P.C."/>
            <person name="Denamur E."/>
        </authorList>
    </citation>
    <scope>NUCLEOTIDE SEQUENCE [LARGE SCALE GENOMIC DNA]</scope>
    <source>
        <strain>IAI39 / ExPEC</strain>
    </source>
</reference>
<accession>B7NP09</accession>
<keyword id="KW-1015">Disulfide bond</keyword>
<keyword id="KW-0378">Hydrolase</keyword>
<keyword id="KW-0479">Metal-binding</keyword>
<keyword id="KW-0482">Metalloprotease</keyword>
<keyword id="KW-0574">Periplasm</keyword>
<keyword id="KW-0645">Protease</keyword>
<keyword id="KW-0732">Signal</keyword>
<keyword id="KW-0862">Zinc</keyword>
<feature type="signal peptide" evidence="1">
    <location>
        <begin position="1"/>
        <end position="19"/>
    </location>
</feature>
<feature type="chain" id="PRO_1000186096" description="Penicillin-insensitive murein endopeptidase">
    <location>
        <begin position="20"/>
        <end position="274"/>
    </location>
</feature>
<feature type="region of interest" description="Disordered" evidence="2">
    <location>
        <begin position="227"/>
        <end position="274"/>
    </location>
</feature>
<feature type="binding site" evidence="1">
    <location>
        <position position="110"/>
    </location>
    <ligand>
        <name>Zn(2+)</name>
        <dbReference type="ChEBI" id="CHEBI:29105"/>
        <label>1</label>
    </ligand>
</feature>
<feature type="binding site" evidence="1">
    <location>
        <position position="113"/>
    </location>
    <ligand>
        <name>Zn(2+)</name>
        <dbReference type="ChEBI" id="CHEBI:29105"/>
        <label>1</label>
    </ligand>
</feature>
<feature type="binding site" evidence="1">
    <location>
        <position position="120"/>
    </location>
    <ligand>
        <name>Zn(2+)</name>
        <dbReference type="ChEBI" id="CHEBI:29105"/>
        <label>1</label>
    </ligand>
</feature>
<feature type="binding site" evidence="1">
    <location>
        <position position="147"/>
    </location>
    <ligand>
        <name>Zn(2+)</name>
        <dbReference type="ChEBI" id="CHEBI:29105"/>
        <label>2</label>
    </ligand>
</feature>
<feature type="binding site" evidence="1">
    <location>
        <position position="150"/>
    </location>
    <ligand>
        <name>Zn(2+)</name>
        <dbReference type="ChEBI" id="CHEBI:29105"/>
        <label>2</label>
    </ligand>
</feature>
<feature type="binding site" evidence="1">
    <location>
        <position position="211"/>
    </location>
    <ligand>
        <name>Zn(2+)</name>
        <dbReference type="ChEBI" id="CHEBI:29105"/>
        <label>1</label>
    </ligand>
</feature>
<feature type="disulfide bond" evidence="1">
    <location>
        <begin position="44"/>
        <end position="265"/>
    </location>
</feature>
<feature type="disulfide bond" evidence="1">
    <location>
        <begin position="187"/>
        <end position="235"/>
    </location>
</feature>
<feature type="disulfide bond" evidence="1">
    <location>
        <begin position="216"/>
        <end position="223"/>
    </location>
</feature>
<dbReference type="EC" id="3.4.24.-" evidence="1"/>
<dbReference type="EMBL" id="CU928164">
    <property type="protein sequence ID" value="CAR18603.1"/>
    <property type="molecule type" value="Genomic_DNA"/>
</dbReference>
<dbReference type="RefSeq" id="WP_001043802.1">
    <property type="nucleotide sequence ID" value="NC_011750.1"/>
</dbReference>
<dbReference type="RefSeq" id="YP_002408433.1">
    <property type="nucleotide sequence ID" value="NC_011750.1"/>
</dbReference>
<dbReference type="SMR" id="B7NP09"/>
<dbReference type="STRING" id="585057.ECIAI39_2477"/>
<dbReference type="MEROPS" id="M74.001"/>
<dbReference type="KEGG" id="ect:ECIAI39_2477"/>
<dbReference type="PATRIC" id="fig|585057.6.peg.2581"/>
<dbReference type="HOGENOM" id="CLU_052496_0_0_6"/>
<dbReference type="Proteomes" id="UP000000749">
    <property type="component" value="Chromosome"/>
</dbReference>
<dbReference type="GO" id="GO:0030288">
    <property type="term" value="C:outer membrane-bounded periplasmic space"/>
    <property type="evidence" value="ECO:0007669"/>
    <property type="project" value="InterPro"/>
</dbReference>
<dbReference type="GO" id="GO:0046872">
    <property type="term" value="F:metal ion binding"/>
    <property type="evidence" value="ECO:0007669"/>
    <property type="project" value="UniProtKB-KW"/>
</dbReference>
<dbReference type="GO" id="GO:0004222">
    <property type="term" value="F:metalloendopeptidase activity"/>
    <property type="evidence" value="ECO:0007669"/>
    <property type="project" value="UniProtKB-UniRule"/>
</dbReference>
<dbReference type="GO" id="GO:0004252">
    <property type="term" value="F:serine-type endopeptidase activity"/>
    <property type="evidence" value="ECO:0007669"/>
    <property type="project" value="InterPro"/>
</dbReference>
<dbReference type="GO" id="GO:0000270">
    <property type="term" value="P:peptidoglycan metabolic process"/>
    <property type="evidence" value="ECO:0007669"/>
    <property type="project" value="UniProtKB-UniRule"/>
</dbReference>
<dbReference type="GO" id="GO:0006508">
    <property type="term" value="P:proteolysis"/>
    <property type="evidence" value="ECO:0007669"/>
    <property type="project" value="UniProtKB-KW"/>
</dbReference>
<dbReference type="FunFam" id="3.30.1380.10:FF:000002">
    <property type="entry name" value="Penicillin-insensitive murein endopeptidase"/>
    <property type="match status" value="1"/>
</dbReference>
<dbReference type="Gene3D" id="3.30.1380.10">
    <property type="match status" value="1"/>
</dbReference>
<dbReference type="HAMAP" id="MF_01623">
    <property type="entry name" value="MepA"/>
    <property type="match status" value="1"/>
</dbReference>
<dbReference type="InterPro" id="IPR009045">
    <property type="entry name" value="Hedgehog_sig/DD-Pept_Zn-bd_sf"/>
</dbReference>
<dbReference type="InterPro" id="IPR005073">
    <property type="entry name" value="Peptidase_M74"/>
</dbReference>
<dbReference type="NCBIfam" id="NF006947">
    <property type="entry name" value="PRK09429.1"/>
    <property type="match status" value="1"/>
</dbReference>
<dbReference type="Pfam" id="PF03411">
    <property type="entry name" value="Peptidase_M74"/>
    <property type="match status" value="1"/>
</dbReference>
<dbReference type="PIRSF" id="PIRSF018455">
    <property type="entry name" value="MepA"/>
    <property type="match status" value="1"/>
</dbReference>
<dbReference type="SUPFAM" id="SSF55166">
    <property type="entry name" value="Hedgehog/DD-peptidase"/>
    <property type="match status" value="1"/>
</dbReference>
<organism>
    <name type="scientific">Escherichia coli O7:K1 (strain IAI39 / ExPEC)</name>
    <dbReference type="NCBI Taxonomy" id="585057"/>
    <lineage>
        <taxon>Bacteria</taxon>
        <taxon>Pseudomonadati</taxon>
        <taxon>Pseudomonadota</taxon>
        <taxon>Gammaproteobacteria</taxon>
        <taxon>Enterobacterales</taxon>
        <taxon>Enterobacteriaceae</taxon>
        <taxon>Escherichia</taxon>
    </lineage>
</organism>
<sequence>MNKTAIALLALLASSASLAATPWQKITQPVPGSAQSIGSFSNGCIVGADTLPIQSEHYQVMRTDQRRYFGHPDLVMFIQRLSRQVSNLGMGTVLIGDMGMPAGGRFNGGHASHQTGLDVDIFLQLPKTRWTSAQLLRPQALDLVSRDGKHVVPALWKPEIFSLIKLAAQDKDVTRIFVNPAIKQQLCLDAGTDRDWLRKVRPWFQHRAHMHVRLRCPADSLECEDQPLPPPGDGCGAELQSWFEPPKPGTTKPEKKTPPPLPPSCQALLDEHVI</sequence>
<name>MEPA_ECO7I</name>
<comment type="function">
    <text evidence="1">Murein endopeptidase that cleaves the D-alanyl-meso-2,6-diamino-pimelyl amide bond that connects peptidoglycan strands. Likely plays a role in the removal of murein from the sacculus.</text>
</comment>
<comment type="cofactor">
    <cofactor evidence="1">
        <name>Zn(2+)</name>
        <dbReference type="ChEBI" id="CHEBI:29105"/>
    </cofactor>
    <text evidence="1">Binds 2 Zn(2+) ions per subunit. Zn(2+) ion 1 is bound in the active site. Zn(2+) ion 2 is bound at the dimer interface by residues from both subunits.</text>
</comment>
<comment type="subunit">
    <text evidence="1">Dimer.</text>
</comment>
<comment type="subcellular location">
    <subcellularLocation>
        <location evidence="1">Periplasm</location>
    </subcellularLocation>
</comment>
<comment type="similarity">
    <text evidence="1">Belongs to the peptidase M74 family.</text>
</comment>
<gene>
    <name evidence="1" type="primary">mepA</name>
    <name type="ordered locus">ECIAI39_2477</name>
</gene>
<evidence type="ECO:0000255" key="1">
    <source>
        <dbReference type="HAMAP-Rule" id="MF_01623"/>
    </source>
</evidence>
<evidence type="ECO:0000256" key="2">
    <source>
        <dbReference type="SAM" id="MobiDB-lite"/>
    </source>
</evidence>
<protein>
    <recommendedName>
        <fullName evidence="1">Penicillin-insensitive murein endopeptidase</fullName>
        <ecNumber evidence="1">3.4.24.-</ecNumber>
    </recommendedName>
    <alternativeName>
        <fullName evidence="1">D-alanyl-D-alanine-endopeptidase</fullName>
        <shortName evidence="1">DD-endopeptidase</shortName>
    </alternativeName>
</protein>
<proteinExistence type="inferred from homology"/>